<sequence length="394" mass="44113">MIIKNAGQIITFDSEGNFKLIKDKSIVIENNIISDITDNKNNDDAIDASNMVVMPGFIDSHTHLAYAGTRENELYMRSHGQSYLDILNLGGGIHKTMNDTESSGEDKIFNETIKRVDESILNGTTYLEIKSGYGKTINGERRLINAIKRIKSIYRNVKITLLAHAVPDNINEYDYAGYFINNMIPAFKNDVDFLDVFCDAGAFSRKSTEMILEAGVSSRLKLKIHADELKNIGCIDLCKRFNFTSVDHLLNTRNDQLNYIKDSGAVATILPVTAFSLDSDYVNAQRFINKKIDVAIASDASPASYNSNMIFAIYLAVRYCNISLENAIKAATINGARSLKIDESTGSIEPGKNADLIILDIDDYKKLPYMYMSRLVRYSFINGIKIVDNFNLIH</sequence>
<evidence type="ECO:0000255" key="1">
    <source>
        <dbReference type="HAMAP-Rule" id="MF_00372"/>
    </source>
</evidence>
<reference key="1">
    <citation type="journal article" date="2004" name="Proc. Natl. Acad. Sci. U.S.A.">
        <title>Genome sequence of Picrophilus torridus and its implications for life around pH 0.</title>
        <authorList>
            <person name="Fuetterer O."/>
            <person name="Angelov A."/>
            <person name="Liesegang H."/>
            <person name="Gottschalk G."/>
            <person name="Schleper C."/>
            <person name="Schepers B."/>
            <person name="Dock C."/>
            <person name="Antranikian G."/>
            <person name="Liebl W."/>
        </authorList>
    </citation>
    <scope>NUCLEOTIDE SEQUENCE [LARGE SCALE GENOMIC DNA]</scope>
    <source>
        <strain>ATCC 700027 / DSM 9790 / JCM 10055 / NBRC 100828 / KAW 2/3</strain>
    </source>
</reference>
<keyword id="KW-0963">Cytoplasm</keyword>
<keyword id="KW-0369">Histidine metabolism</keyword>
<keyword id="KW-0378">Hydrolase</keyword>
<keyword id="KW-0408">Iron</keyword>
<keyword id="KW-0479">Metal-binding</keyword>
<keyword id="KW-0862">Zinc</keyword>
<accession>Q6L2W1</accession>
<feature type="chain" id="PRO_0000306546" description="Imidazolonepropionase">
    <location>
        <begin position="1"/>
        <end position="394"/>
    </location>
</feature>
<feature type="binding site" evidence="1">
    <location>
        <position position="61"/>
    </location>
    <ligand>
        <name>Fe(3+)</name>
        <dbReference type="ChEBI" id="CHEBI:29034"/>
    </ligand>
</feature>
<feature type="binding site" evidence="1">
    <location>
        <position position="61"/>
    </location>
    <ligand>
        <name>Zn(2+)</name>
        <dbReference type="ChEBI" id="CHEBI:29105"/>
    </ligand>
</feature>
<feature type="binding site" evidence="1">
    <location>
        <position position="63"/>
    </location>
    <ligand>
        <name>Fe(3+)</name>
        <dbReference type="ChEBI" id="CHEBI:29034"/>
    </ligand>
</feature>
<feature type="binding site" evidence="1">
    <location>
        <position position="63"/>
    </location>
    <ligand>
        <name>Zn(2+)</name>
        <dbReference type="ChEBI" id="CHEBI:29105"/>
    </ligand>
</feature>
<feature type="binding site" evidence="1">
    <location>
        <position position="70"/>
    </location>
    <ligand>
        <name>4-imidazolone-5-propanoate</name>
        <dbReference type="ChEBI" id="CHEBI:77893"/>
    </ligand>
</feature>
<feature type="binding site" evidence="1">
    <location>
        <position position="133"/>
    </location>
    <ligand>
        <name>4-imidazolone-5-propanoate</name>
        <dbReference type="ChEBI" id="CHEBI:77893"/>
    </ligand>
</feature>
<feature type="binding site" evidence="1">
    <location>
        <position position="133"/>
    </location>
    <ligand>
        <name>N-formimidoyl-L-glutamate</name>
        <dbReference type="ChEBI" id="CHEBI:58928"/>
    </ligand>
</feature>
<feature type="binding site" evidence="1">
    <location>
        <position position="164"/>
    </location>
    <ligand>
        <name>4-imidazolone-5-propanoate</name>
        <dbReference type="ChEBI" id="CHEBI:77893"/>
    </ligand>
</feature>
<feature type="binding site" evidence="1">
    <location>
        <position position="225"/>
    </location>
    <ligand>
        <name>Fe(3+)</name>
        <dbReference type="ChEBI" id="CHEBI:29034"/>
    </ligand>
</feature>
<feature type="binding site" evidence="1">
    <location>
        <position position="225"/>
    </location>
    <ligand>
        <name>Zn(2+)</name>
        <dbReference type="ChEBI" id="CHEBI:29105"/>
    </ligand>
</feature>
<feature type="binding site" evidence="1">
    <location>
        <position position="228"/>
    </location>
    <ligand>
        <name>4-imidazolone-5-propanoate</name>
        <dbReference type="ChEBI" id="CHEBI:77893"/>
    </ligand>
</feature>
<feature type="binding site" evidence="1">
    <location>
        <position position="299"/>
    </location>
    <ligand>
        <name>Fe(3+)</name>
        <dbReference type="ChEBI" id="CHEBI:29034"/>
    </ligand>
</feature>
<feature type="binding site" evidence="1">
    <location>
        <position position="299"/>
    </location>
    <ligand>
        <name>Zn(2+)</name>
        <dbReference type="ChEBI" id="CHEBI:29105"/>
    </ligand>
</feature>
<protein>
    <recommendedName>
        <fullName evidence="1">Imidazolonepropionase</fullName>
        <ecNumber evidence="1">3.5.2.7</ecNumber>
    </recommendedName>
    <alternativeName>
        <fullName evidence="1">Imidazolone-5-propionate hydrolase</fullName>
    </alternativeName>
</protein>
<gene>
    <name evidence="1" type="primary">hutI</name>
    <name type="ordered locus">PTO0105</name>
</gene>
<organism>
    <name type="scientific">Picrophilus torridus (strain ATCC 700027 / DSM 9790 / JCM 10055 / NBRC 100828 / KAW 2/3)</name>
    <dbReference type="NCBI Taxonomy" id="1122961"/>
    <lineage>
        <taxon>Archaea</taxon>
        <taxon>Methanobacteriati</taxon>
        <taxon>Thermoplasmatota</taxon>
        <taxon>Thermoplasmata</taxon>
        <taxon>Thermoplasmatales</taxon>
        <taxon>Picrophilaceae</taxon>
        <taxon>Picrophilus</taxon>
    </lineage>
</organism>
<proteinExistence type="inferred from homology"/>
<comment type="function">
    <text evidence="1">Catalyzes the hydrolytic cleavage of the carbon-nitrogen bond in imidazolone-5-propanoate to yield N-formimidoyl-L-glutamate. It is the third step in the universal histidine degradation pathway.</text>
</comment>
<comment type="catalytic activity">
    <reaction evidence="1">
        <text>4-imidazolone-5-propanoate + H2O = N-formimidoyl-L-glutamate</text>
        <dbReference type="Rhea" id="RHEA:23660"/>
        <dbReference type="ChEBI" id="CHEBI:15377"/>
        <dbReference type="ChEBI" id="CHEBI:58928"/>
        <dbReference type="ChEBI" id="CHEBI:77893"/>
        <dbReference type="EC" id="3.5.2.7"/>
    </reaction>
</comment>
<comment type="cofactor">
    <cofactor evidence="1">
        <name>Zn(2+)</name>
        <dbReference type="ChEBI" id="CHEBI:29105"/>
    </cofactor>
    <cofactor evidence="1">
        <name>Fe(3+)</name>
        <dbReference type="ChEBI" id="CHEBI:29034"/>
    </cofactor>
    <text evidence="1">Binds 1 zinc or iron ion per subunit.</text>
</comment>
<comment type="pathway">
    <text evidence="1">Amino-acid degradation; L-histidine degradation into L-glutamate; N-formimidoyl-L-glutamate from L-histidine: step 3/3.</text>
</comment>
<comment type="subcellular location">
    <subcellularLocation>
        <location evidence="1">Cytoplasm</location>
    </subcellularLocation>
</comment>
<comment type="similarity">
    <text evidence="1">Belongs to the metallo-dependent hydrolases superfamily. HutI family.</text>
</comment>
<name>HUTI_PICTO</name>
<dbReference type="EC" id="3.5.2.7" evidence="1"/>
<dbReference type="EMBL" id="AE017261">
    <property type="protein sequence ID" value="AAT42690.1"/>
    <property type="molecule type" value="Genomic_DNA"/>
</dbReference>
<dbReference type="RefSeq" id="WP_011176906.1">
    <property type="nucleotide sequence ID" value="NC_005877.1"/>
</dbReference>
<dbReference type="SMR" id="Q6L2W1"/>
<dbReference type="FunCoup" id="Q6L2W1">
    <property type="interactions" value="8"/>
</dbReference>
<dbReference type="STRING" id="263820.PTO0105"/>
<dbReference type="PaxDb" id="263820-PTO0105"/>
<dbReference type="GeneID" id="2844166"/>
<dbReference type="KEGG" id="pto:PTO0105"/>
<dbReference type="PATRIC" id="fig|263820.9.peg.119"/>
<dbReference type="eggNOG" id="arCOG00696">
    <property type="taxonomic scope" value="Archaea"/>
</dbReference>
<dbReference type="HOGENOM" id="CLU_041647_0_1_2"/>
<dbReference type="InParanoid" id="Q6L2W1"/>
<dbReference type="OrthoDB" id="24954at2157"/>
<dbReference type="UniPathway" id="UPA00379">
    <property type="reaction ID" value="UER00551"/>
</dbReference>
<dbReference type="Proteomes" id="UP000000438">
    <property type="component" value="Chromosome"/>
</dbReference>
<dbReference type="GO" id="GO:0005737">
    <property type="term" value="C:cytoplasm"/>
    <property type="evidence" value="ECO:0007669"/>
    <property type="project" value="UniProtKB-SubCell"/>
</dbReference>
<dbReference type="GO" id="GO:0050480">
    <property type="term" value="F:imidazolonepropionase activity"/>
    <property type="evidence" value="ECO:0007669"/>
    <property type="project" value="UniProtKB-UniRule"/>
</dbReference>
<dbReference type="GO" id="GO:0005506">
    <property type="term" value="F:iron ion binding"/>
    <property type="evidence" value="ECO:0007669"/>
    <property type="project" value="UniProtKB-UniRule"/>
</dbReference>
<dbReference type="GO" id="GO:0008270">
    <property type="term" value="F:zinc ion binding"/>
    <property type="evidence" value="ECO:0007669"/>
    <property type="project" value="UniProtKB-UniRule"/>
</dbReference>
<dbReference type="GO" id="GO:0019556">
    <property type="term" value="P:L-histidine catabolic process to glutamate and formamide"/>
    <property type="evidence" value="ECO:0007669"/>
    <property type="project" value="UniProtKB-UniPathway"/>
</dbReference>
<dbReference type="GO" id="GO:0019557">
    <property type="term" value="P:L-histidine catabolic process to glutamate and formate"/>
    <property type="evidence" value="ECO:0007669"/>
    <property type="project" value="UniProtKB-UniPathway"/>
</dbReference>
<dbReference type="Gene3D" id="3.20.20.140">
    <property type="entry name" value="Metal-dependent hydrolases"/>
    <property type="match status" value="1"/>
</dbReference>
<dbReference type="Gene3D" id="2.30.40.10">
    <property type="entry name" value="Urease, subunit C, domain 1"/>
    <property type="match status" value="1"/>
</dbReference>
<dbReference type="HAMAP" id="MF_00372">
    <property type="entry name" value="HutI"/>
    <property type="match status" value="1"/>
</dbReference>
<dbReference type="InterPro" id="IPR006680">
    <property type="entry name" value="Amidohydro-rel"/>
</dbReference>
<dbReference type="InterPro" id="IPR005920">
    <property type="entry name" value="HutI"/>
</dbReference>
<dbReference type="InterPro" id="IPR011059">
    <property type="entry name" value="Metal-dep_hydrolase_composite"/>
</dbReference>
<dbReference type="InterPro" id="IPR032466">
    <property type="entry name" value="Metal_Hydrolase"/>
</dbReference>
<dbReference type="NCBIfam" id="TIGR01224">
    <property type="entry name" value="hutI"/>
    <property type="match status" value="1"/>
</dbReference>
<dbReference type="PANTHER" id="PTHR42752">
    <property type="entry name" value="IMIDAZOLONEPROPIONASE"/>
    <property type="match status" value="1"/>
</dbReference>
<dbReference type="PANTHER" id="PTHR42752:SF1">
    <property type="entry name" value="IMIDAZOLONEPROPIONASE-RELATED"/>
    <property type="match status" value="1"/>
</dbReference>
<dbReference type="Pfam" id="PF01979">
    <property type="entry name" value="Amidohydro_1"/>
    <property type="match status" value="1"/>
</dbReference>
<dbReference type="SUPFAM" id="SSF51338">
    <property type="entry name" value="Composite domain of metallo-dependent hydrolases"/>
    <property type="match status" value="1"/>
</dbReference>
<dbReference type="SUPFAM" id="SSF51556">
    <property type="entry name" value="Metallo-dependent hydrolases"/>
    <property type="match status" value="1"/>
</dbReference>